<organism>
    <name type="scientific">Halictus sexcinctus</name>
    <name type="common">Six-banded furrow bee</name>
    <name type="synonym">Apis sexcincta</name>
    <dbReference type="NCBI Taxonomy" id="115105"/>
    <lineage>
        <taxon>Eukaryota</taxon>
        <taxon>Metazoa</taxon>
        <taxon>Ecdysozoa</taxon>
        <taxon>Arthropoda</taxon>
        <taxon>Hexapoda</taxon>
        <taxon>Insecta</taxon>
        <taxon>Pterygota</taxon>
        <taxon>Neoptera</taxon>
        <taxon>Endopterygota</taxon>
        <taxon>Hymenoptera</taxon>
        <taxon>Apocrita</taxon>
        <taxon>Aculeata</taxon>
        <taxon>Apoidea</taxon>
        <taxon>Anthophila</taxon>
        <taxon>Halictidae</taxon>
        <taxon>Halictinae</taxon>
        <taxon>Halictini</taxon>
        <taxon>Halictus</taxon>
        <taxon>Halictus</taxon>
    </lineage>
</organism>
<feature type="peptide" id="PRO_0000457808" description="Halictine-1" evidence="1">
    <location>
        <begin position="1"/>
        <end position="12"/>
    </location>
</feature>
<feature type="modified residue" description="Arginine amide" evidence="1">
    <location>
        <position position="12"/>
    </location>
</feature>
<feature type="mutagenesis site" description="In HAL-1/10; loss of hemolytic activity and increase (~3-fold) in antibacterial activity against Pseudomonas aeruginosa; when associated with K-9." evidence="1">
    <original>S</original>
    <variation>K</variation>
    <location>
        <position position="4"/>
    </location>
</feature>
<feature type="mutagenesis site" description="In HAL-1/10; loss of hemolytic activity and increase (~3-fold) in antibacterial activity against Pseudomonas aeruginosa; when associated with K-4." evidence="1">
    <original>H</original>
    <variation>K</variation>
    <location>
        <position position="9"/>
    </location>
</feature>
<name>HAL1_HALST</name>
<comment type="function">
    <text evidence="1 2 3 4 5">Short linear cationic amphipathic alpha-helical antimicrobial peptide (AMP) with potent activity against both Gram-positive and Gram-negative bacteria, and moderate activity against the yeast C.albicans (PubMed:20198492, Ref.2). Has been tested on B.subtilis (MIC=0.8 uM), S.aureus (MIC=7.7 uM), E.coli (MIC=3.8 uM), P.aeruginosa (MIC=45 uM), and the yeast C.albicans (MIC=6.2 uM) (PubMed:20198492, Ref.2). Has also noticeable hemolytic activity (LC(50)=102 uM on human erythrocytes, and 82 uM on rat cells), indicating it cannot be considered for therapeutic application (PubMed:20198492). Interacts more strongly with anionic membranes compared to the zwitterionic ones because of the electrostatic contribution (PubMed:32336099). Interaction with anionic membranes is accompanied by structuring of the peptide as an alpha-helix and deep insertion into the membrane causing substantial membrane permeabilization at very low peptide/lipid molar ratios (PubMed:32336099). In the context of inflammation and cancer tests, is weakly cytotoxic to normal cells, induces calcium signaling but does not impact cAMP production (PubMed:22100226, PubMed:36548715). In addition, prevents LPS-induced nitric oxid (NO) synthesis but does not affect the IP3 signaling and pro-inflammatory activation of endothelial cells (PubMed:36548715). Is cytotoxic towards cancer cells (HeLa S3 (IC(50)=11 uM), CRC SW 480 (IC(50)=44 uM), CCRF-CEM T (IC(50)=49 uM)), but does not show significant antiproliferative activity on the breast cancer cell line MDA-MB-231 (PubMed:22100226, PubMed:36548715).</text>
</comment>
<comment type="subcellular location">
    <subcellularLocation>
        <location evidence="1">Secreted</location>
    </subcellularLocation>
    <subcellularLocation>
        <location evidence="3 10">Target cell membrane</location>
    </subcellularLocation>
    <text evidence="3">Adopts an amphipathic alpha-helical structure in the presence of membrane models, and inserts into membranes.</text>
</comment>
<comment type="tissue specificity">
    <text evidence="10">Expressed by the venom gland.</text>
</comment>
<comment type="mass spectrometry" mass="1408.8" method="Electrospray" evidence="1">
    <text>Monoisotopic mass.</text>
</comment>
<comment type="miscellaneous">
    <text evidence="1 5">More than 20 analogs have been synthesized to study the effect on cationicity, hydrophobicity, alpha-helicity, amphipathicity, antibacterial, antifungal and hemolytic activities (PubMed:20198492, Ref.2). A decrease of hemolytic activity is accompanied by undesirable decrease of antimicrobial potency (PubMed:20198492).</text>
</comment>
<comment type="similarity">
    <text evidence="9">Belongs to the lasioglossin-like family.</text>
</comment>
<accession>P0DQX4</accession>
<reference key="1">
    <citation type="journal article" date="2010" name="Amino Acids">
        <title>Novel antimicrobial peptides from the venom of the eusocial bee Halictus sexcinctus (Hymenoptera: Halictidae) and their analogs.</title>
        <authorList>
            <person name="Monincova L."/>
            <person name="Budesinsky M."/>
            <person name="Slaninova J."/>
            <person name="Hovorka O."/>
            <person name="Cvacka J."/>
            <person name="Voburka Z."/>
            <person name="Fucik V."/>
            <person name="Borovickova L."/>
            <person name="Bednarova L."/>
            <person name="Straka J."/>
            <person name="Cerovsky V."/>
        </authorList>
    </citation>
    <scope>PROTEIN SEQUENCE</scope>
    <scope>FUNCTION</scope>
    <scope>AMIDATION AT ARG-12</scope>
    <scope>MASS SPECTROMETRY</scope>
    <scope>SUBCELLULAR LOCATION</scope>
    <scope>SYNTHESIS</scope>
    <scope>MUTAGENESIS OF SER-4 AND HIS-9</scope>
    <source>
        <tissue>Venom</tissue>
    </source>
</reference>
<reference key="2">
    <citation type="journal article" date="2011" name="Cent. Eur. J. Biol.">
        <title>The antifungal effect of peptides from hymenoptera venom and their analogs.</title>
        <authorList>
            <person name="Slaninova J."/>
            <person name="Putnova H."/>
            <person name="Borovickova L."/>
            <person name="Sacha P."/>
            <person name="Cerovsky V."/>
            <person name="Monincova L."/>
            <person name="Fucik V."/>
        </authorList>
    </citation>
    <scope>FUNCTION ON THE YEAST CANDIDA ALBICANS</scope>
</reference>
<reference key="3">
    <citation type="journal article" date="2012" name="Peptides">
        <title>Toxicity study of antimicrobial peptides from wild bee venom and their analogs toward mammalian normal and cancer cells.</title>
        <authorList>
            <person name="Slaninova J."/>
            <person name="Mlsova V."/>
            <person name="Kroupova H."/>
            <person name="Alan L."/>
            <person name="Tumova T."/>
            <person name="Monincova L."/>
            <person name="Borovickova L."/>
            <person name="Fucik V."/>
            <person name="Cerovsky V."/>
        </authorList>
    </citation>
    <scope>FUNCTION ON NORMAL AND CANCER CELLS</scope>
</reference>
<reference key="4">
    <citation type="journal article" date="2020" name="Langmuir">
        <title>Revealing the mode of action of halictine antimicrobial peptides: a comprehensive study with model membranes.</title>
        <authorList>
            <person name="Domingues T.M."/>
            <person name="Perez K.R."/>
            <person name="Riske K.A."/>
        </authorList>
    </citation>
    <scope>FUNCTION</scope>
    <scope>SUBCELLULAR LOCATION</scope>
</reference>
<reference key="5">
    <citation type="journal article" date="2022" name="Toxins">
        <title>The pharmacological potential of novel melittin variants from the honeybee and solitary bees against inflammation and cancer.</title>
        <authorList>
            <person name="Erkoc P."/>
            <person name="von Reumont B.M."/>
            <person name="Lueddecke T."/>
            <person name="Henke M."/>
            <person name="Ulshoefer T."/>
            <person name="Vilcinskas A."/>
            <person name="Fuerst R."/>
            <person name="Schiffmann S."/>
        </authorList>
    </citation>
    <scope>FUNCTION</scope>
</reference>
<protein>
    <recommendedName>
        <fullName evidence="6 7">Halictine-1</fullName>
        <shortName evidence="6 7 8">HAL-1</shortName>
    </recommendedName>
    <alternativeName>
        <fullName evidence="9">Halictin 1</fullName>
    </alternativeName>
    <alternativeName>
        <fullName evidence="8">Halictine I</fullName>
    </alternativeName>
</protein>
<sequence length="12" mass="1411">GMWSKILGHLIR</sequence>
<dbReference type="GO" id="GO:0005576">
    <property type="term" value="C:extracellular region"/>
    <property type="evidence" value="ECO:0007669"/>
    <property type="project" value="UniProtKB-SubCell"/>
</dbReference>
<dbReference type="GO" id="GO:0016020">
    <property type="term" value="C:membrane"/>
    <property type="evidence" value="ECO:0007669"/>
    <property type="project" value="UniProtKB-KW"/>
</dbReference>
<dbReference type="GO" id="GO:0044218">
    <property type="term" value="C:other organism cell membrane"/>
    <property type="evidence" value="ECO:0007669"/>
    <property type="project" value="UniProtKB-KW"/>
</dbReference>
<dbReference type="GO" id="GO:0042742">
    <property type="term" value="P:defense response to bacterium"/>
    <property type="evidence" value="ECO:0007669"/>
    <property type="project" value="UniProtKB-KW"/>
</dbReference>
<dbReference type="GO" id="GO:0050832">
    <property type="term" value="P:defense response to fungus"/>
    <property type="evidence" value="ECO:0007669"/>
    <property type="project" value="UniProtKB-KW"/>
</dbReference>
<dbReference type="GO" id="GO:0045087">
    <property type="term" value="P:innate immune response"/>
    <property type="evidence" value="ECO:0007669"/>
    <property type="project" value="UniProtKB-KW"/>
</dbReference>
<dbReference type="GO" id="GO:0031640">
    <property type="term" value="P:killing of cells of another organism"/>
    <property type="evidence" value="ECO:0007669"/>
    <property type="project" value="UniProtKB-KW"/>
</dbReference>
<keyword id="KW-0027">Amidation</keyword>
<keyword id="KW-0044">Antibiotic</keyword>
<keyword id="KW-0929">Antimicrobial</keyword>
<keyword id="KW-0903">Direct protein sequencing</keyword>
<keyword id="KW-0295">Fungicide</keyword>
<keyword id="KW-0391">Immunity</keyword>
<keyword id="KW-0399">Innate immunity</keyword>
<keyword id="KW-0472">Membrane</keyword>
<keyword id="KW-0964">Secreted</keyword>
<keyword id="KW-1052">Target cell membrane</keyword>
<keyword id="KW-1053">Target membrane</keyword>
<evidence type="ECO:0000269" key="1">
    <source>
    </source>
</evidence>
<evidence type="ECO:0000269" key="2">
    <source>
    </source>
</evidence>
<evidence type="ECO:0000269" key="3">
    <source>
    </source>
</evidence>
<evidence type="ECO:0000269" key="4">
    <source>
    </source>
</evidence>
<evidence type="ECO:0000269" key="5">
    <source ref="2"/>
</evidence>
<evidence type="ECO:0000303" key="6">
    <source>
    </source>
</evidence>
<evidence type="ECO:0000303" key="7">
    <source>
    </source>
</evidence>
<evidence type="ECO:0000303" key="8">
    <source ref="2"/>
</evidence>
<evidence type="ECO:0000305" key="9"/>
<evidence type="ECO:0000305" key="10">
    <source>
    </source>
</evidence>
<proteinExistence type="evidence at protein level"/>